<sequence length="170" mass="19014">MDLKKHILNVKDFPIDGIDFKDVTPLLNDADAFAYVIDEMAKFVIECGANVVVAPEARGFLFASAVAYKSHTRFVLVRKPGKLPREVIDIEYTLEYGTNHQQMHKGDIKPGDKVVIIDDVLATGGTIEAIVKLVEMQEGKVEGVSFLIDLPALHDENLLQEYKVQKLVKY</sequence>
<organism>
    <name type="scientific">Mesoplasma florum (strain ATCC 33453 / NBRC 100688 / NCTC 11704 / L1)</name>
    <name type="common">Acholeplasma florum</name>
    <dbReference type="NCBI Taxonomy" id="265311"/>
    <lineage>
        <taxon>Bacteria</taxon>
        <taxon>Bacillati</taxon>
        <taxon>Mycoplasmatota</taxon>
        <taxon>Mollicutes</taxon>
        <taxon>Entomoplasmatales</taxon>
        <taxon>Entomoplasmataceae</taxon>
        <taxon>Mesoplasma</taxon>
    </lineage>
</organism>
<proteinExistence type="inferred from homology"/>
<accession>Q6F1J0</accession>
<keyword id="KW-0963">Cytoplasm</keyword>
<keyword id="KW-0328">Glycosyltransferase</keyword>
<keyword id="KW-0660">Purine salvage</keyword>
<keyword id="KW-1185">Reference proteome</keyword>
<keyword id="KW-0808">Transferase</keyword>
<feature type="chain" id="PRO_0000149407" description="Adenine phosphoribosyltransferase">
    <location>
        <begin position="1"/>
        <end position="170"/>
    </location>
</feature>
<protein>
    <recommendedName>
        <fullName evidence="1">Adenine phosphoribosyltransferase</fullName>
        <shortName evidence="1">APRT</shortName>
        <ecNumber evidence="1">2.4.2.7</ecNumber>
    </recommendedName>
</protein>
<name>APT_MESFL</name>
<comment type="function">
    <text evidence="1">Catalyzes a salvage reaction resulting in the formation of AMP, that is energically less costly than de novo synthesis.</text>
</comment>
<comment type="catalytic activity">
    <reaction evidence="1">
        <text>AMP + diphosphate = 5-phospho-alpha-D-ribose 1-diphosphate + adenine</text>
        <dbReference type="Rhea" id="RHEA:16609"/>
        <dbReference type="ChEBI" id="CHEBI:16708"/>
        <dbReference type="ChEBI" id="CHEBI:33019"/>
        <dbReference type="ChEBI" id="CHEBI:58017"/>
        <dbReference type="ChEBI" id="CHEBI:456215"/>
        <dbReference type="EC" id="2.4.2.7"/>
    </reaction>
</comment>
<comment type="pathway">
    <text evidence="1">Purine metabolism; AMP biosynthesis via salvage pathway; AMP from adenine: step 1/1.</text>
</comment>
<comment type="subunit">
    <text evidence="1">Homodimer.</text>
</comment>
<comment type="subcellular location">
    <subcellularLocation>
        <location evidence="1">Cytoplasm</location>
    </subcellularLocation>
</comment>
<comment type="similarity">
    <text evidence="1">Belongs to the purine/pyrimidine phosphoribosyltransferase family.</text>
</comment>
<reference key="1">
    <citation type="submission" date="2004-06" db="EMBL/GenBank/DDBJ databases">
        <authorList>
            <person name="Birren B.W."/>
            <person name="Stange-Thomann N."/>
            <person name="Hafez N."/>
            <person name="DeCaprio D."/>
            <person name="Fisher S."/>
            <person name="Butler J."/>
            <person name="Elkins T."/>
            <person name="Kodira C.D."/>
            <person name="Major J."/>
            <person name="Wang S."/>
            <person name="Nicol R."/>
            <person name="Nusbaum C."/>
        </authorList>
    </citation>
    <scope>NUCLEOTIDE SEQUENCE [LARGE SCALE GENOMIC DNA]</scope>
    <source>
        <strain>ATCC 33453 / NBRC 100688 / NCTC 11704 / L1</strain>
    </source>
</reference>
<dbReference type="EC" id="2.4.2.7" evidence="1"/>
<dbReference type="EMBL" id="AE017263">
    <property type="protein sequence ID" value="AAT75633.1"/>
    <property type="molecule type" value="Genomic_DNA"/>
</dbReference>
<dbReference type="RefSeq" id="WP_011183173.1">
    <property type="nucleotide sequence ID" value="NC_006055.1"/>
</dbReference>
<dbReference type="RefSeq" id="YP_053517.1">
    <property type="nucleotide sequence ID" value="NC_006055.1"/>
</dbReference>
<dbReference type="SMR" id="Q6F1J0"/>
<dbReference type="STRING" id="265311.Mfl276"/>
<dbReference type="PaxDb" id="265311-Mfl276"/>
<dbReference type="EnsemblBacteria" id="AAT75633">
    <property type="protein sequence ID" value="AAT75633"/>
    <property type="gene ID" value="Mfl276"/>
</dbReference>
<dbReference type="GeneID" id="2897963"/>
<dbReference type="KEGG" id="mfl:Mfl276"/>
<dbReference type="PATRIC" id="fig|265311.5.peg.276"/>
<dbReference type="eggNOG" id="COG0503">
    <property type="taxonomic scope" value="Bacteria"/>
</dbReference>
<dbReference type="HOGENOM" id="CLU_063339_3_0_14"/>
<dbReference type="OrthoDB" id="9803963at2"/>
<dbReference type="UniPathway" id="UPA00588">
    <property type="reaction ID" value="UER00646"/>
</dbReference>
<dbReference type="Proteomes" id="UP000006647">
    <property type="component" value="Chromosome"/>
</dbReference>
<dbReference type="GO" id="GO:0005737">
    <property type="term" value="C:cytoplasm"/>
    <property type="evidence" value="ECO:0007669"/>
    <property type="project" value="UniProtKB-SubCell"/>
</dbReference>
<dbReference type="GO" id="GO:0002055">
    <property type="term" value="F:adenine binding"/>
    <property type="evidence" value="ECO:0007669"/>
    <property type="project" value="TreeGrafter"/>
</dbReference>
<dbReference type="GO" id="GO:0003999">
    <property type="term" value="F:adenine phosphoribosyltransferase activity"/>
    <property type="evidence" value="ECO:0007669"/>
    <property type="project" value="UniProtKB-UniRule"/>
</dbReference>
<dbReference type="GO" id="GO:0016208">
    <property type="term" value="F:AMP binding"/>
    <property type="evidence" value="ECO:0007669"/>
    <property type="project" value="TreeGrafter"/>
</dbReference>
<dbReference type="GO" id="GO:0006168">
    <property type="term" value="P:adenine salvage"/>
    <property type="evidence" value="ECO:0007669"/>
    <property type="project" value="InterPro"/>
</dbReference>
<dbReference type="GO" id="GO:0044209">
    <property type="term" value="P:AMP salvage"/>
    <property type="evidence" value="ECO:0007669"/>
    <property type="project" value="UniProtKB-UniRule"/>
</dbReference>
<dbReference type="GO" id="GO:0006166">
    <property type="term" value="P:purine ribonucleoside salvage"/>
    <property type="evidence" value="ECO:0007669"/>
    <property type="project" value="UniProtKB-KW"/>
</dbReference>
<dbReference type="CDD" id="cd06223">
    <property type="entry name" value="PRTases_typeI"/>
    <property type="match status" value="1"/>
</dbReference>
<dbReference type="FunFam" id="3.40.50.2020:FF:000004">
    <property type="entry name" value="Adenine phosphoribosyltransferase"/>
    <property type="match status" value="1"/>
</dbReference>
<dbReference type="Gene3D" id="3.40.50.2020">
    <property type="match status" value="1"/>
</dbReference>
<dbReference type="HAMAP" id="MF_00004">
    <property type="entry name" value="Aden_phosphoribosyltr"/>
    <property type="match status" value="1"/>
</dbReference>
<dbReference type="InterPro" id="IPR005764">
    <property type="entry name" value="Ade_phspho_trans"/>
</dbReference>
<dbReference type="InterPro" id="IPR000836">
    <property type="entry name" value="PRibTrfase_dom"/>
</dbReference>
<dbReference type="InterPro" id="IPR029057">
    <property type="entry name" value="PRTase-like"/>
</dbReference>
<dbReference type="InterPro" id="IPR050054">
    <property type="entry name" value="UPRTase/APRTase"/>
</dbReference>
<dbReference type="NCBIfam" id="TIGR01090">
    <property type="entry name" value="apt"/>
    <property type="match status" value="1"/>
</dbReference>
<dbReference type="NCBIfam" id="NF002634">
    <property type="entry name" value="PRK02304.1-3"/>
    <property type="match status" value="1"/>
</dbReference>
<dbReference type="NCBIfam" id="NF002636">
    <property type="entry name" value="PRK02304.1-5"/>
    <property type="match status" value="1"/>
</dbReference>
<dbReference type="PANTHER" id="PTHR32315">
    <property type="entry name" value="ADENINE PHOSPHORIBOSYLTRANSFERASE"/>
    <property type="match status" value="1"/>
</dbReference>
<dbReference type="PANTHER" id="PTHR32315:SF3">
    <property type="entry name" value="ADENINE PHOSPHORIBOSYLTRANSFERASE"/>
    <property type="match status" value="1"/>
</dbReference>
<dbReference type="Pfam" id="PF00156">
    <property type="entry name" value="Pribosyltran"/>
    <property type="match status" value="1"/>
</dbReference>
<dbReference type="SUPFAM" id="SSF53271">
    <property type="entry name" value="PRTase-like"/>
    <property type="match status" value="1"/>
</dbReference>
<dbReference type="PROSITE" id="PS00103">
    <property type="entry name" value="PUR_PYR_PR_TRANSFER"/>
    <property type="match status" value="1"/>
</dbReference>
<gene>
    <name evidence="1" type="primary">apt</name>
    <name type="ordered locus">Mfl276</name>
</gene>
<evidence type="ECO:0000255" key="1">
    <source>
        <dbReference type="HAMAP-Rule" id="MF_00004"/>
    </source>
</evidence>